<name>EFP_POLNS</name>
<feature type="chain" id="PRO_1000096187" description="Elongation factor P">
    <location>
        <begin position="1"/>
        <end position="186"/>
    </location>
</feature>
<gene>
    <name evidence="1" type="primary">efp</name>
    <name type="ordered locus">Pnec_0421</name>
</gene>
<accession>B1XTM0</accession>
<protein>
    <recommendedName>
        <fullName evidence="1">Elongation factor P</fullName>
        <shortName evidence="1">EF-P</shortName>
    </recommendedName>
</protein>
<keyword id="KW-0963">Cytoplasm</keyword>
<keyword id="KW-0251">Elongation factor</keyword>
<keyword id="KW-0648">Protein biosynthesis</keyword>
<dbReference type="EMBL" id="CP001010">
    <property type="protein sequence ID" value="ACB43697.1"/>
    <property type="molecule type" value="Genomic_DNA"/>
</dbReference>
<dbReference type="SMR" id="B1XTM0"/>
<dbReference type="STRING" id="452638.Pnec_0421"/>
<dbReference type="KEGG" id="pne:Pnec_0421"/>
<dbReference type="eggNOG" id="COG0231">
    <property type="taxonomic scope" value="Bacteria"/>
</dbReference>
<dbReference type="HOGENOM" id="CLU_074944_2_1_4"/>
<dbReference type="OrthoDB" id="9801844at2"/>
<dbReference type="UniPathway" id="UPA00345"/>
<dbReference type="GO" id="GO:0005737">
    <property type="term" value="C:cytoplasm"/>
    <property type="evidence" value="ECO:0007669"/>
    <property type="project" value="UniProtKB-SubCell"/>
</dbReference>
<dbReference type="GO" id="GO:0003746">
    <property type="term" value="F:translation elongation factor activity"/>
    <property type="evidence" value="ECO:0007669"/>
    <property type="project" value="UniProtKB-UniRule"/>
</dbReference>
<dbReference type="GO" id="GO:0043043">
    <property type="term" value="P:peptide biosynthetic process"/>
    <property type="evidence" value="ECO:0007669"/>
    <property type="project" value="InterPro"/>
</dbReference>
<dbReference type="CDD" id="cd04470">
    <property type="entry name" value="S1_EF-P_repeat_1"/>
    <property type="match status" value="1"/>
</dbReference>
<dbReference type="CDD" id="cd05794">
    <property type="entry name" value="S1_EF-P_repeat_2"/>
    <property type="match status" value="1"/>
</dbReference>
<dbReference type="FunFam" id="2.40.50.140:FF:000004">
    <property type="entry name" value="Elongation factor P"/>
    <property type="match status" value="1"/>
</dbReference>
<dbReference type="FunFam" id="2.40.50.140:FF:000009">
    <property type="entry name" value="Elongation factor P"/>
    <property type="match status" value="1"/>
</dbReference>
<dbReference type="Gene3D" id="2.30.30.30">
    <property type="match status" value="1"/>
</dbReference>
<dbReference type="Gene3D" id="2.40.50.140">
    <property type="entry name" value="Nucleic acid-binding proteins"/>
    <property type="match status" value="2"/>
</dbReference>
<dbReference type="HAMAP" id="MF_00141">
    <property type="entry name" value="EF_P"/>
    <property type="match status" value="1"/>
</dbReference>
<dbReference type="InterPro" id="IPR015365">
    <property type="entry name" value="Elong-fact-P_C"/>
</dbReference>
<dbReference type="InterPro" id="IPR012340">
    <property type="entry name" value="NA-bd_OB-fold"/>
</dbReference>
<dbReference type="InterPro" id="IPR014722">
    <property type="entry name" value="Rib_uL2_dom2"/>
</dbReference>
<dbReference type="InterPro" id="IPR020599">
    <property type="entry name" value="Transl_elong_fac_P/YeiP"/>
</dbReference>
<dbReference type="InterPro" id="IPR013185">
    <property type="entry name" value="Transl_elong_KOW-like"/>
</dbReference>
<dbReference type="InterPro" id="IPR001059">
    <property type="entry name" value="Transl_elong_P/YeiP_cen"/>
</dbReference>
<dbReference type="InterPro" id="IPR013852">
    <property type="entry name" value="Transl_elong_P/YeiP_CS"/>
</dbReference>
<dbReference type="InterPro" id="IPR011768">
    <property type="entry name" value="Transl_elongation_fac_P"/>
</dbReference>
<dbReference type="InterPro" id="IPR008991">
    <property type="entry name" value="Translation_prot_SH3-like_sf"/>
</dbReference>
<dbReference type="NCBIfam" id="TIGR00038">
    <property type="entry name" value="efp"/>
    <property type="match status" value="1"/>
</dbReference>
<dbReference type="NCBIfam" id="NF001810">
    <property type="entry name" value="PRK00529.1"/>
    <property type="match status" value="1"/>
</dbReference>
<dbReference type="PANTHER" id="PTHR30053">
    <property type="entry name" value="ELONGATION FACTOR P"/>
    <property type="match status" value="1"/>
</dbReference>
<dbReference type="PANTHER" id="PTHR30053:SF12">
    <property type="entry name" value="ELONGATION FACTOR P (EF-P) FAMILY PROTEIN"/>
    <property type="match status" value="1"/>
</dbReference>
<dbReference type="Pfam" id="PF01132">
    <property type="entry name" value="EFP"/>
    <property type="match status" value="1"/>
</dbReference>
<dbReference type="Pfam" id="PF08207">
    <property type="entry name" value="EFP_N"/>
    <property type="match status" value="1"/>
</dbReference>
<dbReference type="Pfam" id="PF09285">
    <property type="entry name" value="Elong-fact-P_C"/>
    <property type="match status" value="1"/>
</dbReference>
<dbReference type="PIRSF" id="PIRSF005901">
    <property type="entry name" value="EF-P"/>
    <property type="match status" value="1"/>
</dbReference>
<dbReference type="SMART" id="SM01185">
    <property type="entry name" value="EFP"/>
    <property type="match status" value="1"/>
</dbReference>
<dbReference type="SMART" id="SM00841">
    <property type="entry name" value="Elong-fact-P_C"/>
    <property type="match status" value="1"/>
</dbReference>
<dbReference type="SUPFAM" id="SSF50249">
    <property type="entry name" value="Nucleic acid-binding proteins"/>
    <property type="match status" value="2"/>
</dbReference>
<dbReference type="SUPFAM" id="SSF50104">
    <property type="entry name" value="Translation proteins SH3-like domain"/>
    <property type="match status" value="1"/>
</dbReference>
<dbReference type="PROSITE" id="PS01275">
    <property type="entry name" value="EFP"/>
    <property type="match status" value="1"/>
</dbReference>
<comment type="function">
    <text evidence="1">Involved in peptide bond synthesis. Stimulates efficient translation and peptide-bond synthesis on native or reconstituted 70S ribosomes in vitro. Probably functions indirectly by altering the affinity of the ribosome for aminoacyl-tRNA, thus increasing their reactivity as acceptors for peptidyl transferase.</text>
</comment>
<comment type="pathway">
    <text evidence="1">Protein biosynthesis; polypeptide chain elongation.</text>
</comment>
<comment type="subcellular location">
    <subcellularLocation>
        <location evidence="1">Cytoplasm</location>
    </subcellularLocation>
</comment>
<comment type="similarity">
    <text evidence="1">Belongs to the elongation factor P family.</text>
</comment>
<reference key="1">
    <citation type="journal article" date="2013" name="Proc. Natl. Acad. Sci. U.S.A.">
        <title>Polynucleobacter necessarius, a model for genome reduction in both free-living and symbiotic bacteria.</title>
        <authorList>
            <person name="Boscaro V."/>
            <person name="Felletti M."/>
            <person name="Vannini C."/>
            <person name="Ackerman M.S."/>
            <person name="Chain P.S."/>
            <person name="Malfatti S."/>
            <person name="Vergez L.M."/>
            <person name="Shin M."/>
            <person name="Doak T.G."/>
            <person name="Lynch M."/>
            <person name="Petroni G."/>
        </authorList>
    </citation>
    <scope>NUCLEOTIDE SEQUENCE [LARGE SCALE GENOMIC DNA]</scope>
    <source>
        <strain>STIR1</strain>
    </source>
</reference>
<organism>
    <name type="scientific">Polynucleobacter necessarius subsp. necessarius (strain STIR1)</name>
    <dbReference type="NCBI Taxonomy" id="452638"/>
    <lineage>
        <taxon>Bacteria</taxon>
        <taxon>Pseudomonadati</taxon>
        <taxon>Pseudomonadota</taxon>
        <taxon>Betaproteobacteria</taxon>
        <taxon>Burkholderiales</taxon>
        <taxon>Burkholderiaceae</taxon>
        <taxon>Polynucleobacter</taxon>
    </lineage>
</organism>
<sequence length="186" mass="20804">MKTAQELRVGNVVMIGTDAQVVLKAEYSRSGRNSSVVKMKFKNLLTGAPNEGVYKADDKFDVVILDKKECTYSYFADPMYVFMDGDYNQYEVEAEFMGDALNYLEESMPCEVVFYEGKALSVAMPNSLVREIIYTEPAVKGDTSSGKVLKNAKLATGYELQVPLFCNTGDKIEIDTRTGEYRSRAN</sequence>
<proteinExistence type="inferred from homology"/>
<evidence type="ECO:0000255" key="1">
    <source>
        <dbReference type="HAMAP-Rule" id="MF_00141"/>
    </source>
</evidence>